<organism>
    <name type="scientific">Desulforudis audaxviator (strain MP104C)</name>
    <dbReference type="NCBI Taxonomy" id="477974"/>
    <lineage>
        <taxon>Bacteria</taxon>
        <taxon>Bacillati</taxon>
        <taxon>Bacillota</taxon>
        <taxon>Clostridia</taxon>
        <taxon>Thermoanaerobacterales</taxon>
        <taxon>Candidatus Desulforudaceae</taxon>
        <taxon>Candidatus Desulforudis</taxon>
    </lineage>
</organism>
<evidence type="ECO:0000255" key="1">
    <source>
        <dbReference type="HAMAP-Rule" id="MF_00235"/>
    </source>
</evidence>
<accession>B1I3R5</accession>
<keyword id="KW-0067">ATP-binding</keyword>
<keyword id="KW-0963">Cytoplasm</keyword>
<keyword id="KW-0418">Kinase</keyword>
<keyword id="KW-0479">Metal-binding</keyword>
<keyword id="KW-0545">Nucleotide biosynthesis</keyword>
<keyword id="KW-0547">Nucleotide-binding</keyword>
<keyword id="KW-1185">Reference proteome</keyword>
<keyword id="KW-0808">Transferase</keyword>
<keyword id="KW-0862">Zinc</keyword>
<gene>
    <name evidence="1" type="primary">adk</name>
    <name type="ordered locus">Daud_1111</name>
</gene>
<sequence>MNLLIMGPPGGGKGTQCEVLVRELKITHISTGDMFRENVKGGTELGLKAKEYMDAGQLVPDELVVAMVKDRLSKPDCANGFLLDGFPRTVPQAEALDATLKDMGIILDAVLNIAVPRGKLLDRLTGRRVCRVCGATFHVLFNAPKEDGKCDKCGGELYQRSDDTEATVNQRLDVYEAQTQPLIEYYGKQGLLKEINGDQEIGKVTQDLLASLGR</sequence>
<name>KAD_DESAP</name>
<reference key="1">
    <citation type="submission" date="2007-10" db="EMBL/GenBank/DDBJ databases">
        <title>Complete sequence of chromosome of Desulforudis audaxviator MP104C.</title>
        <authorList>
            <person name="Copeland A."/>
            <person name="Lucas S."/>
            <person name="Lapidus A."/>
            <person name="Barry K."/>
            <person name="Glavina del Rio T."/>
            <person name="Dalin E."/>
            <person name="Tice H."/>
            <person name="Bruce D."/>
            <person name="Pitluck S."/>
            <person name="Lowry S.R."/>
            <person name="Larimer F."/>
            <person name="Land M.L."/>
            <person name="Hauser L."/>
            <person name="Kyrpides N."/>
            <person name="Ivanova N.N."/>
            <person name="Richardson P."/>
        </authorList>
    </citation>
    <scope>NUCLEOTIDE SEQUENCE [LARGE SCALE GENOMIC DNA]</scope>
    <source>
        <strain>MP104C</strain>
    </source>
</reference>
<dbReference type="EC" id="2.7.4.3" evidence="1"/>
<dbReference type="EMBL" id="CP000860">
    <property type="protein sequence ID" value="ACA59622.1"/>
    <property type="molecule type" value="Genomic_DNA"/>
</dbReference>
<dbReference type="RefSeq" id="WP_012302208.1">
    <property type="nucleotide sequence ID" value="NC_010424.1"/>
</dbReference>
<dbReference type="SMR" id="B1I3R5"/>
<dbReference type="STRING" id="477974.Daud_1111"/>
<dbReference type="KEGG" id="dau:Daud_1111"/>
<dbReference type="eggNOG" id="COG0563">
    <property type="taxonomic scope" value="Bacteria"/>
</dbReference>
<dbReference type="HOGENOM" id="CLU_032354_1_2_9"/>
<dbReference type="OrthoDB" id="9805030at2"/>
<dbReference type="UniPathway" id="UPA00588">
    <property type="reaction ID" value="UER00649"/>
</dbReference>
<dbReference type="Proteomes" id="UP000008544">
    <property type="component" value="Chromosome"/>
</dbReference>
<dbReference type="GO" id="GO:0005737">
    <property type="term" value="C:cytoplasm"/>
    <property type="evidence" value="ECO:0007669"/>
    <property type="project" value="UniProtKB-SubCell"/>
</dbReference>
<dbReference type="GO" id="GO:0004017">
    <property type="term" value="F:adenylate kinase activity"/>
    <property type="evidence" value="ECO:0007669"/>
    <property type="project" value="UniProtKB-UniRule"/>
</dbReference>
<dbReference type="GO" id="GO:0005524">
    <property type="term" value="F:ATP binding"/>
    <property type="evidence" value="ECO:0007669"/>
    <property type="project" value="UniProtKB-UniRule"/>
</dbReference>
<dbReference type="GO" id="GO:0008270">
    <property type="term" value="F:zinc ion binding"/>
    <property type="evidence" value="ECO:0007669"/>
    <property type="project" value="UniProtKB-UniRule"/>
</dbReference>
<dbReference type="GO" id="GO:0044209">
    <property type="term" value="P:AMP salvage"/>
    <property type="evidence" value="ECO:0007669"/>
    <property type="project" value="UniProtKB-UniRule"/>
</dbReference>
<dbReference type="CDD" id="cd01428">
    <property type="entry name" value="ADK"/>
    <property type="match status" value="1"/>
</dbReference>
<dbReference type="FunFam" id="3.40.50.300:FF:000106">
    <property type="entry name" value="Adenylate kinase mitochondrial"/>
    <property type="match status" value="1"/>
</dbReference>
<dbReference type="Gene3D" id="3.40.50.300">
    <property type="entry name" value="P-loop containing nucleotide triphosphate hydrolases"/>
    <property type="match status" value="1"/>
</dbReference>
<dbReference type="HAMAP" id="MF_00235">
    <property type="entry name" value="Adenylate_kinase_Adk"/>
    <property type="match status" value="1"/>
</dbReference>
<dbReference type="InterPro" id="IPR006259">
    <property type="entry name" value="Adenyl_kin_sub"/>
</dbReference>
<dbReference type="InterPro" id="IPR000850">
    <property type="entry name" value="Adenylat/UMP-CMP_kin"/>
</dbReference>
<dbReference type="InterPro" id="IPR033690">
    <property type="entry name" value="Adenylat_kinase_CS"/>
</dbReference>
<dbReference type="InterPro" id="IPR007862">
    <property type="entry name" value="Adenylate_kinase_lid-dom"/>
</dbReference>
<dbReference type="InterPro" id="IPR027417">
    <property type="entry name" value="P-loop_NTPase"/>
</dbReference>
<dbReference type="NCBIfam" id="TIGR01351">
    <property type="entry name" value="adk"/>
    <property type="match status" value="1"/>
</dbReference>
<dbReference type="NCBIfam" id="NF001380">
    <property type="entry name" value="PRK00279.1-2"/>
    <property type="match status" value="1"/>
</dbReference>
<dbReference type="NCBIfam" id="NF001381">
    <property type="entry name" value="PRK00279.1-3"/>
    <property type="match status" value="1"/>
</dbReference>
<dbReference type="NCBIfam" id="NF011100">
    <property type="entry name" value="PRK14527.1"/>
    <property type="match status" value="1"/>
</dbReference>
<dbReference type="PANTHER" id="PTHR23359">
    <property type="entry name" value="NUCLEOTIDE KINASE"/>
    <property type="match status" value="1"/>
</dbReference>
<dbReference type="Pfam" id="PF00406">
    <property type="entry name" value="ADK"/>
    <property type="match status" value="1"/>
</dbReference>
<dbReference type="Pfam" id="PF05191">
    <property type="entry name" value="ADK_lid"/>
    <property type="match status" value="1"/>
</dbReference>
<dbReference type="PRINTS" id="PR00094">
    <property type="entry name" value="ADENYLTKNASE"/>
</dbReference>
<dbReference type="SUPFAM" id="SSF52540">
    <property type="entry name" value="P-loop containing nucleoside triphosphate hydrolases"/>
    <property type="match status" value="1"/>
</dbReference>
<dbReference type="PROSITE" id="PS00113">
    <property type="entry name" value="ADENYLATE_KINASE"/>
    <property type="match status" value="1"/>
</dbReference>
<protein>
    <recommendedName>
        <fullName evidence="1">Adenylate kinase</fullName>
        <shortName evidence="1">AK</shortName>
        <ecNumber evidence="1">2.7.4.3</ecNumber>
    </recommendedName>
    <alternativeName>
        <fullName evidence="1">ATP-AMP transphosphorylase</fullName>
    </alternativeName>
    <alternativeName>
        <fullName evidence="1">ATP:AMP phosphotransferase</fullName>
    </alternativeName>
    <alternativeName>
        <fullName evidence="1">Adenylate monophosphate kinase</fullName>
    </alternativeName>
</protein>
<feature type="chain" id="PRO_1000100557" description="Adenylate kinase">
    <location>
        <begin position="1"/>
        <end position="214"/>
    </location>
</feature>
<feature type="region of interest" description="NMP" evidence="1">
    <location>
        <begin position="30"/>
        <end position="59"/>
    </location>
</feature>
<feature type="region of interest" description="LID" evidence="1">
    <location>
        <begin position="126"/>
        <end position="163"/>
    </location>
</feature>
<feature type="binding site" evidence="1">
    <location>
        <begin position="10"/>
        <end position="15"/>
    </location>
    <ligand>
        <name>ATP</name>
        <dbReference type="ChEBI" id="CHEBI:30616"/>
    </ligand>
</feature>
<feature type="binding site" evidence="1">
    <location>
        <position position="31"/>
    </location>
    <ligand>
        <name>AMP</name>
        <dbReference type="ChEBI" id="CHEBI:456215"/>
    </ligand>
</feature>
<feature type="binding site" evidence="1">
    <location>
        <position position="36"/>
    </location>
    <ligand>
        <name>AMP</name>
        <dbReference type="ChEBI" id="CHEBI:456215"/>
    </ligand>
</feature>
<feature type="binding site" evidence="1">
    <location>
        <begin position="57"/>
        <end position="59"/>
    </location>
    <ligand>
        <name>AMP</name>
        <dbReference type="ChEBI" id="CHEBI:456215"/>
    </ligand>
</feature>
<feature type="binding site" evidence="1">
    <location>
        <begin position="85"/>
        <end position="88"/>
    </location>
    <ligand>
        <name>AMP</name>
        <dbReference type="ChEBI" id="CHEBI:456215"/>
    </ligand>
</feature>
<feature type="binding site" evidence="1">
    <location>
        <position position="92"/>
    </location>
    <ligand>
        <name>AMP</name>
        <dbReference type="ChEBI" id="CHEBI:456215"/>
    </ligand>
</feature>
<feature type="binding site" evidence="1">
    <location>
        <position position="127"/>
    </location>
    <ligand>
        <name>ATP</name>
        <dbReference type="ChEBI" id="CHEBI:30616"/>
    </ligand>
</feature>
<feature type="binding site" evidence="1">
    <location>
        <position position="130"/>
    </location>
    <ligand>
        <name>Zn(2+)</name>
        <dbReference type="ChEBI" id="CHEBI:29105"/>
        <note>structural</note>
    </ligand>
</feature>
<feature type="binding site" evidence="1">
    <location>
        <position position="133"/>
    </location>
    <ligand>
        <name>Zn(2+)</name>
        <dbReference type="ChEBI" id="CHEBI:29105"/>
        <note>structural</note>
    </ligand>
</feature>
<feature type="binding site" evidence="1">
    <location>
        <begin position="136"/>
        <end position="137"/>
    </location>
    <ligand>
        <name>ATP</name>
        <dbReference type="ChEBI" id="CHEBI:30616"/>
    </ligand>
</feature>
<feature type="binding site" evidence="1">
    <location>
        <position position="150"/>
    </location>
    <ligand>
        <name>Zn(2+)</name>
        <dbReference type="ChEBI" id="CHEBI:29105"/>
        <note>structural</note>
    </ligand>
</feature>
<feature type="binding site" evidence="1">
    <location>
        <position position="153"/>
    </location>
    <ligand>
        <name>Zn(2+)</name>
        <dbReference type="ChEBI" id="CHEBI:29105"/>
        <note>structural</note>
    </ligand>
</feature>
<feature type="binding site" evidence="1">
    <location>
        <position position="160"/>
    </location>
    <ligand>
        <name>AMP</name>
        <dbReference type="ChEBI" id="CHEBI:456215"/>
    </ligand>
</feature>
<feature type="binding site" evidence="1">
    <location>
        <position position="171"/>
    </location>
    <ligand>
        <name>AMP</name>
        <dbReference type="ChEBI" id="CHEBI:456215"/>
    </ligand>
</feature>
<feature type="binding site" evidence="1">
    <location>
        <position position="199"/>
    </location>
    <ligand>
        <name>ATP</name>
        <dbReference type="ChEBI" id="CHEBI:30616"/>
    </ligand>
</feature>
<proteinExistence type="inferred from homology"/>
<comment type="function">
    <text evidence="1">Catalyzes the reversible transfer of the terminal phosphate group between ATP and AMP. Plays an important role in cellular energy homeostasis and in adenine nucleotide metabolism.</text>
</comment>
<comment type="catalytic activity">
    <reaction evidence="1">
        <text>AMP + ATP = 2 ADP</text>
        <dbReference type="Rhea" id="RHEA:12973"/>
        <dbReference type="ChEBI" id="CHEBI:30616"/>
        <dbReference type="ChEBI" id="CHEBI:456215"/>
        <dbReference type="ChEBI" id="CHEBI:456216"/>
        <dbReference type="EC" id="2.7.4.3"/>
    </reaction>
</comment>
<comment type="pathway">
    <text evidence="1">Purine metabolism; AMP biosynthesis via salvage pathway; AMP from ADP: step 1/1.</text>
</comment>
<comment type="subunit">
    <text evidence="1">Monomer.</text>
</comment>
<comment type="subcellular location">
    <subcellularLocation>
        <location evidence="1">Cytoplasm</location>
    </subcellularLocation>
</comment>
<comment type="domain">
    <text evidence="1">Consists of three domains, a large central CORE domain and two small peripheral domains, NMPbind and LID, which undergo movements during catalysis. The LID domain closes over the site of phosphoryl transfer upon ATP binding. Assembling and dissambling the active center during each catalytic cycle provides an effective means to prevent ATP hydrolysis. Some bacteria have evolved a zinc-coordinating structure that stabilizes the LID domain.</text>
</comment>
<comment type="similarity">
    <text evidence="1">Belongs to the adenylate kinase family.</text>
</comment>